<evidence type="ECO:0000255" key="1">
    <source>
        <dbReference type="HAMAP-Rule" id="MF_00161"/>
    </source>
</evidence>
<accession>A1VCU2</accession>
<organism>
    <name type="scientific">Nitratidesulfovibrio vulgaris (strain DP4)</name>
    <name type="common">Desulfovibrio vulgaris</name>
    <dbReference type="NCBI Taxonomy" id="391774"/>
    <lineage>
        <taxon>Bacteria</taxon>
        <taxon>Pseudomonadati</taxon>
        <taxon>Thermodesulfobacteriota</taxon>
        <taxon>Desulfovibrionia</taxon>
        <taxon>Desulfovibrionales</taxon>
        <taxon>Desulfovibrionaceae</taxon>
        <taxon>Nitratidesulfovibrio</taxon>
    </lineage>
</organism>
<dbReference type="EC" id="3.4.23.36" evidence="1"/>
<dbReference type="EMBL" id="CP000527">
    <property type="protein sequence ID" value="ABM28258.1"/>
    <property type="molecule type" value="Genomic_DNA"/>
</dbReference>
<dbReference type="RefSeq" id="WP_010939214.1">
    <property type="nucleotide sequence ID" value="NC_008751.1"/>
</dbReference>
<dbReference type="SMR" id="A1VCU2"/>
<dbReference type="KEGG" id="dvl:Dvul_1239"/>
<dbReference type="HOGENOM" id="CLU_083252_4_0_7"/>
<dbReference type="UniPathway" id="UPA00665"/>
<dbReference type="Proteomes" id="UP000009173">
    <property type="component" value="Chromosome"/>
</dbReference>
<dbReference type="GO" id="GO:0005886">
    <property type="term" value="C:plasma membrane"/>
    <property type="evidence" value="ECO:0007669"/>
    <property type="project" value="UniProtKB-SubCell"/>
</dbReference>
<dbReference type="GO" id="GO:0004190">
    <property type="term" value="F:aspartic-type endopeptidase activity"/>
    <property type="evidence" value="ECO:0007669"/>
    <property type="project" value="UniProtKB-UniRule"/>
</dbReference>
<dbReference type="GO" id="GO:0006508">
    <property type="term" value="P:proteolysis"/>
    <property type="evidence" value="ECO:0007669"/>
    <property type="project" value="UniProtKB-KW"/>
</dbReference>
<dbReference type="HAMAP" id="MF_00161">
    <property type="entry name" value="LspA"/>
    <property type="match status" value="1"/>
</dbReference>
<dbReference type="InterPro" id="IPR001872">
    <property type="entry name" value="Peptidase_A8"/>
</dbReference>
<dbReference type="NCBIfam" id="TIGR00077">
    <property type="entry name" value="lspA"/>
    <property type="match status" value="1"/>
</dbReference>
<dbReference type="PANTHER" id="PTHR33695">
    <property type="entry name" value="LIPOPROTEIN SIGNAL PEPTIDASE"/>
    <property type="match status" value="1"/>
</dbReference>
<dbReference type="PANTHER" id="PTHR33695:SF1">
    <property type="entry name" value="LIPOPROTEIN SIGNAL PEPTIDASE"/>
    <property type="match status" value="1"/>
</dbReference>
<dbReference type="Pfam" id="PF01252">
    <property type="entry name" value="Peptidase_A8"/>
    <property type="match status" value="1"/>
</dbReference>
<dbReference type="PRINTS" id="PR00781">
    <property type="entry name" value="LIPOSIGPTASE"/>
</dbReference>
<dbReference type="PROSITE" id="PS00855">
    <property type="entry name" value="SPASE_II"/>
    <property type="match status" value="1"/>
</dbReference>
<name>LSPA_NITV4</name>
<feature type="chain" id="PRO_1000038801" description="Lipoprotein signal peptidase">
    <location>
        <begin position="1"/>
        <end position="165"/>
    </location>
</feature>
<feature type="transmembrane region" description="Helical" evidence="1">
    <location>
        <begin position="66"/>
        <end position="86"/>
    </location>
</feature>
<feature type="transmembrane region" description="Helical" evidence="1">
    <location>
        <begin position="91"/>
        <end position="111"/>
    </location>
</feature>
<feature type="transmembrane region" description="Helical" evidence="1">
    <location>
        <begin position="132"/>
        <end position="152"/>
    </location>
</feature>
<feature type="active site" evidence="1">
    <location>
        <position position="121"/>
    </location>
</feature>
<feature type="active site" evidence="1">
    <location>
        <position position="139"/>
    </location>
</feature>
<keyword id="KW-0064">Aspartyl protease</keyword>
<keyword id="KW-0997">Cell inner membrane</keyword>
<keyword id="KW-1003">Cell membrane</keyword>
<keyword id="KW-0378">Hydrolase</keyword>
<keyword id="KW-0472">Membrane</keyword>
<keyword id="KW-0645">Protease</keyword>
<keyword id="KW-0812">Transmembrane</keyword>
<keyword id="KW-1133">Transmembrane helix</keyword>
<comment type="function">
    <text evidence="1">This protein specifically catalyzes the removal of signal peptides from prolipoproteins.</text>
</comment>
<comment type="catalytic activity">
    <reaction evidence="1">
        <text>Release of signal peptides from bacterial membrane prolipoproteins. Hydrolyzes -Xaa-Yaa-Zaa-|-(S,diacylglyceryl)Cys-, in which Xaa is hydrophobic (preferably Leu), and Yaa (Ala or Ser) and Zaa (Gly or Ala) have small, neutral side chains.</text>
        <dbReference type="EC" id="3.4.23.36"/>
    </reaction>
</comment>
<comment type="pathway">
    <text evidence="1">Protein modification; lipoprotein biosynthesis (signal peptide cleavage).</text>
</comment>
<comment type="subcellular location">
    <subcellularLocation>
        <location evidence="1">Cell inner membrane</location>
        <topology evidence="1">Multi-pass membrane protein</topology>
    </subcellularLocation>
</comment>
<comment type="similarity">
    <text evidence="1">Belongs to the peptidase A8 family.</text>
</comment>
<sequence>MLSLKYRIVLGLAAVVMLIDQGTKWLVEATIPFHGTVPVIHGVFDLVNIRNRGAAFGFLNRSDIEWQFWLFLVATVLAVWAILSLTRASKNEPVLYTAFGLIMGGALGNLVDRIRYRAVVDFLDFYWGEWHWPAFNVADIAICIGAFLAFVAMYRQPSPERGNKE</sequence>
<reference key="1">
    <citation type="journal article" date="2009" name="Environ. Microbiol.">
        <title>Contribution of mobile genetic elements to Desulfovibrio vulgaris genome plasticity.</title>
        <authorList>
            <person name="Walker C.B."/>
            <person name="Stolyar S."/>
            <person name="Chivian D."/>
            <person name="Pinel N."/>
            <person name="Gabster J.A."/>
            <person name="Dehal P.S."/>
            <person name="He Z."/>
            <person name="Yang Z.K."/>
            <person name="Yen H.C."/>
            <person name="Zhou J."/>
            <person name="Wall J.D."/>
            <person name="Hazen T.C."/>
            <person name="Arkin A.P."/>
            <person name="Stahl D.A."/>
        </authorList>
    </citation>
    <scope>NUCLEOTIDE SEQUENCE [LARGE SCALE GENOMIC DNA]</scope>
    <source>
        <strain>DP4</strain>
    </source>
</reference>
<protein>
    <recommendedName>
        <fullName evidence="1">Lipoprotein signal peptidase</fullName>
        <ecNumber evidence="1">3.4.23.36</ecNumber>
    </recommendedName>
    <alternativeName>
        <fullName evidence="1">Prolipoprotein signal peptidase</fullName>
    </alternativeName>
    <alternativeName>
        <fullName evidence="1">Signal peptidase II</fullName>
        <shortName evidence="1">SPase II</shortName>
    </alternativeName>
</protein>
<gene>
    <name evidence="1" type="primary">lspA</name>
    <name type="ordered locus">Dvul_1239</name>
</gene>
<proteinExistence type="inferred from homology"/>